<protein>
    <recommendedName>
        <fullName>Uncharacterized protein MJ0696</fullName>
    </recommendedName>
</protein>
<evidence type="ECO:0000255" key="1"/>
<evidence type="ECO:0000305" key="2"/>
<comment type="subcellular location">
    <subcellularLocation>
        <location evidence="2">Cell membrane</location>
        <topology evidence="2">Multi-pass membrane protein</topology>
    </subcellularLocation>
</comment>
<comment type="similarity">
    <text evidence="2">To M.jannaschii MJ0803.</text>
</comment>
<name>Y696_METJA</name>
<dbReference type="EMBL" id="L77117">
    <property type="protein sequence ID" value="AAB98697.1"/>
    <property type="molecule type" value="Genomic_DNA"/>
</dbReference>
<dbReference type="PIR" id="H64386">
    <property type="entry name" value="H64386"/>
</dbReference>
<dbReference type="RefSeq" id="WP_010870201.1">
    <property type="nucleotide sequence ID" value="NC_000909.1"/>
</dbReference>
<dbReference type="SMR" id="Q58107"/>
<dbReference type="STRING" id="243232.MJ_0696"/>
<dbReference type="PaxDb" id="243232-MJ_0696"/>
<dbReference type="EnsemblBacteria" id="AAB98697">
    <property type="protein sequence ID" value="AAB98697"/>
    <property type="gene ID" value="MJ_0696"/>
</dbReference>
<dbReference type="GeneID" id="1451563"/>
<dbReference type="KEGG" id="mja:MJ_0696"/>
<dbReference type="eggNOG" id="arCOG09672">
    <property type="taxonomic scope" value="Archaea"/>
</dbReference>
<dbReference type="HOGENOM" id="CLU_1478917_0_0_2"/>
<dbReference type="InParanoid" id="Q58107"/>
<dbReference type="OrthoDB" id="66040at2157"/>
<dbReference type="Proteomes" id="UP000000805">
    <property type="component" value="Chromosome"/>
</dbReference>
<dbReference type="GO" id="GO:0005886">
    <property type="term" value="C:plasma membrane"/>
    <property type="evidence" value="ECO:0007669"/>
    <property type="project" value="UniProtKB-SubCell"/>
</dbReference>
<dbReference type="InterPro" id="IPR009328">
    <property type="entry name" value="DUF986"/>
</dbReference>
<dbReference type="Pfam" id="PF06173">
    <property type="entry name" value="DUF986"/>
    <property type="match status" value="1"/>
</dbReference>
<proteinExistence type="predicted"/>
<feature type="chain" id="PRO_0000106993" description="Uncharacterized protein MJ0696">
    <location>
        <begin position="1"/>
        <end position="182"/>
    </location>
</feature>
<feature type="transmembrane region" description="Helical" evidence="1">
    <location>
        <begin position="58"/>
        <end position="78"/>
    </location>
</feature>
<feature type="transmembrane region" description="Helical" evidence="1">
    <location>
        <begin position="81"/>
        <end position="101"/>
    </location>
</feature>
<gene>
    <name type="ordered locus">MJ0696</name>
</gene>
<accession>Q58107</accession>
<reference key="1">
    <citation type="journal article" date="1996" name="Science">
        <title>Complete genome sequence of the methanogenic archaeon, Methanococcus jannaschii.</title>
        <authorList>
            <person name="Bult C.J."/>
            <person name="White O."/>
            <person name="Olsen G.J."/>
            <person name="Zhou L."/>
            <person name="Fleischmann R.D."/>
            <person name="Sutton G.G."/>
            <person name="Blake J.A."/>
            <person name="FitzGerald L.M."/>
            <person name="Clayton R.A."/>
            <person name="Gocayne J.D."/>
            <person name="Kerlavage A.R."/>
            <person name="Dougherty B.A."/>
            <person name="Tomb J.-F."/>
            <person name="Adams M.D."/>
            <person name="Reich C.I."/>
            <person name="Overbeek R."/>
            <person name="Kirkness E.F."/>
            <person name="Weinstock K.G."/>
            <person name="Merrick J.M."/>
            <person name="Glodek A."/>
            <person name="Scott J.L."/>
            <person name="Geoghagen N.S.M."/>
            <person name="Weidman J.F."/>
            <person name="Fuhrmann J.L."/>
            <person name="Nguyen D."/>
            <person name="Utterback T.R."/>
            <person name="Kelley J.M."/>
            <person name="Peterson J.D."/>
            <person name="Sadow P.W."/>
            <person name="Hanna M.C."/>
            <person name="Cotton M.D."/>
            <person name="Roberts K.M."/>
            <person name="Hurst M.A."/>
            <person name="Kaine B.P."/>
            <person name="Borodovsky M."/>
            <person name="Klenk H.-P."/>
            <person name="Fraser C.M."/>
            <person name="Smith H.O."/>
            <person name="Woese C.R."/>
            <person name="Venter J.C."/>
        </authorList>
    </citation>
    <scope>NUCLEOTIDE SEQUENCE [LARGE SCALE GENOMIC DNA]</scope>
    <source>
        <strain>ATCC 43067 / DSM 2661 / JAL-1 / JCM 10045 / NBRC 100440</strain>
    </source>
</reference>
<keyword id="KW-1003">Cell membrane</keyword>
<keyword id="KW-0472">Membrane</keyword>
<keyword id="KW-1185">Reference proteome</keyword>
<keyword id="KW-0812">Transmembrane</keyword>
<keyword id="KW-1133">Transmembrane helix</keyword>
<sequence length="182" mass="21487">MESILFIAIAFLINSFISYKITNMQPKIKSRIFKRVKMHYLNLIEGKKAEFDKKAMPILFGFMIIALISFNILLYVVYNCPVSITSIIAEILIIISMIIIWKAFNKEISVYLCDDGIYYSNKFISWKNIENVKKDDGFIVLFGKKKKILGRKLYLLQRIYLKYDEEIENIIKNQIEKFRDKA</sequence>
<organism>
    <name type="scientific">Methanocaldococcus jannaschii (strain ATCC 43067 / DSM 2661 / JAL-1 / JCM 10045 / NBRC 100440)</name>
    <name type="common">Methanococcus jannaschii</name>
    <dbReference type="NCBI Taxonomy" id="243232"/>
    <lineage>
        <taxon>Archaea</taxon>
        <taxon>Methanobacteriati</taxon>
        <taxon>Methanobacteriota</taxon>
        <taxon>Methanomada group</taxon>
        <taxon>Methanococci</taxon>
        <taxon>Methanococcales</taxon>
        <taxon>Methanocaldococcaceae</taxon>
        <taxon>Methanocaldococcus</taxon>
    </lineage>
</organism>